<dbReference type="EC" id="5.6.2.1" evidence="1"/>
<dbReference type="EMBL" id="AP006716">
    <property type="protein sequence ID" value="BAE04107.1"/>
    <property type="molecule type" value="Genomic_DNA"/>
</dbReference>
<dbReference type="RefSeq" id="WP_011275121.1">
    <property type="nucleotide sequence ID" value="NC_007168.1"/>
</dbReference>
<dbReference type="SMR" id="Q4L8B8"/>
<dbReference type="KEGG" id="sha:SH0798"/>
<dbReference type="eggNOG" id="COG0550">
    <property type="taxonomic scope" value="Bacteria"/>
</dbReference>
<dbReference type="eggNOG" id="COG0551">
    <property type="taxonomic scope" value="Bacteria"/>
</dbReference>
<dbReference type="HOGENOM" id="CLU_002929_5_2_9"/>
<dbReference type="OrthoDB" id="9803554at2"/>
<dbReference type="Proteomes" id="UP000000543">
    <property type="component" value="Chromosome"/>
</dbReference>
<dbReference type="GO" id="GO:0043597">
    <property type="term" value="C:cytoplasmic replication fork"/>
    <property type="evidence" value="ECO:0007669"/>
    <property type="project" value="TreeGrafter"/>
</dbReference>
<dbReference type="GO" id="GO:0003677">
    <property type="term" value="F:DNA binding"/>
    <property type="evidence" value="ECO:0007669"/>
    <property type="project" value="UniProtKB-KW"/>
</dbReference>
<dbReference type="GO" id="GO:0003917">
    <property type="term" value="F:DNA topoisomerase type I (single strand cut, ATP-independent) activity"/>
    <property type="evidence" value="ECO:0007669"/>
    <property type="project" value="UniProtKB-UniRule"/>
</dbReference>
<dbReference type="GO" id="GO:0000287">
    <property type="term" value="F:magnesium ion binding"/>
    <property type="evidence" value="ECO:0007669"/>
    <property type="project" value="UniProtKB-UniRule"/>
</dbReference>
<dbReference type="GO" id="GO:0006310">
    <property type="term" value="P:DNA recombination"/>
    <property type="evidence" value="ECO:0007669"/>
    <property type="project" value="TreeGrafter"/>
</dbReference>
<dbReference type="GO" id="GO:0006281">
    <property type="term" value="P:DNA repair"/>
    <property type="evidence" value="ECO:0007669"/>
    <property type="project" value="TreeGrafter"/>
</dbReference>
<dbReference type="GO" id="GO:0006265">
    <property type="term" value="P:DNA topological change"/>
    <property type="evidence" value="ECO:0007669"/>
    <property type="project" value="UniProtKB-UniRule"/>
</dbReference>
<dbReference type="CDD" id="cd00186">
    <property type="entry name" value="TOP1Ac"/>
    <property type="match status" value="1"/>
</dbReference>
<dbReference type="CDD" id="cd03362">
    <property type="entry name" value="TOPRIM_TopoIA_TopoIII"/>
    <property type="match status" value="1"/>
</dbReference>
<dbReference type="Gene3D" id="3.40.50.140">
    <property type="match status" value="1"/>
</dbReference>
<dbReference type="Gene3D" id="1.10.460.10">
    <property type="entry name" value="Topoisomerase I, domain 2"/>
    <property type="match status" value="1"/>
</dbReference>
<dbReference type="Gene3D" id="2.70.20.10">
    <property type="entry name" value="Topoisomerase I, domain 3"/>
    <property type="match status" value="1"/>
</dbReference>
<dbReference type="Gene3D" id="1.10.290.10">
    <property type="entry name" value="Topoisomerase I, domain 4"/>
    <property type="match status" value="1"/>
</dbReference>
<dbReference type="HAMAP" id="MF_00953">
    <property type="entry name" value="Topoisom_3_prok"/>
    <property type="match status" value="1"/>
</dbReference>
<dbReference type="InterPro" id="IPR000380">
    <property type="entry name" value="Topo_IA"/>
</dbReference>
<dbReference type="InterPro" id="IPR003601">
    <property type="entry name" value="Topo_IA_2"/>
</dbReference>
<dbReference type="InterPro" id="IPR023406">
    <property type="entry name" value="Topo_IA_AS"/>
</dbReference>
<dbReference type="InterPro" id="IPR013497">
    <property type="entry name" value="Topo_IA_cen"/>
</dbReference>
<dbReference type="InterPro" id="IPR013824">
    <property type="entry name" value="Topo_IA_cen_sub1"/>
</dbReference>
<dbReference type="InterPro" id="IPR013825">
    <property type="entry name" value="Topo_IA_cen_sub2"/>
</dbReference>
<dbReference type="InterPro" id="IPR013826">
    <property type="entry name" value="Topo_IA_cen_sub3"/>
</dbReference>
<dbReference type="InterPro" id="IPR023405">
    <property type="entry name" value="Topo_IA_core_domain"/>
</dbReference>
<dbReference type="InterPro" id="IPR003602">
    <property type="entry name" value="Topo_IA_DNA-bd_dom"/>
</dbReference>
<dbReference type="InterPro" id="IPR005738">
    <property type="entry name" value="TopoIII"/>
</dbReference>
<dbReference type="InterPro" id="IPR006171">
    <property type="entry name" value="TOPRIM_dom"/>
</dbReference>
<dbReference type="InterPro" id="IPR034144">
    <property type="entry name" value="TOPRIM_TopoIII"/>
</dbReference>
<dbReference type="NCBIfam" id="NF005829">
    <property type="entry name" value="PRK07726.1"/>
    <property type="match status" value="1"/>
</dbReference>
<dbReference type="NCBIfam" id="TIGR01056">
    <property type="entry name" value="topB"/>
    <property type="match status" value="1"/>
</dbReference>
<dbReference type="PANTHER" id="PTHR11390:SF21">
    <property type="entry name" value="DNA TOPOISOMERASE 3-ALPHA"/>
    <property type="match status" value="1"/>
</dbReference>
<dbReference type="PANTHER" id="PTHR11390">
    <property type="entry name" value="PROKARYOTIC DNA TOPOISOMERASE"/>
    <property type="match status" value="1"/>
</dbReference>
<dbReference type="Pfam" id="PF01131">
    <property type="entry name" value="Topoisom_bac"/>
    <property type="match status" value="1"/>
</dbReference>
<dbReference type="Pfam" id="PF01751">
    <property type="entry name" value="Toprim"/>
    <property type="match status" value="1"/>
</dbReference>
<dbReference type="PRINTS" id="PR00417">
    <property type="entry name" value="PRTPISMRASEI"/>
</dbReference>
<dbReference type="SMART" id="SM00437">
    <property type="entry name" value="TOP1Ac"/>
    <property type="match status" value="1"/>
</dbReference>
<dbReference type="SMART" id="SM00436">
    <property type="entry name" value="TOP1Bc"/>
    <property type="match status" value="1"/>
</dbReference>
<dbReference type="SMART" id="SM00493">
    <property type="entry name" value="TOPRIM"/>
    <property type="match status" value="1"/>
</dbReference>
<dbReference type="SUPFAM" id="SSF56712">
    <property type="entry name" value="Prokaryotic type I DNA topoisomerase"/>
    <property type="match status" value="1"/>
</dbReference>
<dbReference type="PROSITE" id="PS00396">
    <property type="entry name" value="TOPO_IA_1"/>
    <property type="match status" value="1"/>
</dbReference>
<dbReference type="PROSITE" id="PS52039">
    <property type="entry name" value="TOPO_IA_2"/>
    <property type="match status" value="1"/>
</dbReference>
<dbReference type="PROSITE" id="PS50880">
    <property type="entry name" value="TOPRIM"/>
    <property type="match status" value="1"/>
</dbReference>
<accession>Q4L8B8</accession>
<gene>
    <name evidence="1" type="primary">topB</name>
    <name type="ordered locus">SH0798</name>
</gene>
<keyword id="KW-0238">DNA-binding</keyword>
<keyword id="KW-0413">Isomerase</keyword>
<keyword id="KW-0460">Magnesium</keyword>
<keyword id="KW-0479">Metal-binding</keyword>
<keyword id="KW-0799">Topoisomerase</keyword>
<comment type="function">
    <text evidence="1">Releases the supercoiling and torsional tension of DNA, which is introduced during the DNA replication and transcription, by transiently cleaving and rejoining one strand of the DNA duplex. Introduces a single-strand break via transesterification at a target site in duplex DNA. The scissile phosphodiester is attacked by the catalytic tyrosine of the enzyme, resulting in the formation of a DNA-(5'-phosphotyrosyl)-enzyme intermediate and the expulsion of a 3'-OH DNA strand. The free DNA strand then undergoes passage around the unbroken strand, thus removing DNA supercoils. Finally, in the religation step, the DNA 3'-OH attacks the covalent intermediate to expel the active-site tyrosine and restore the DNA phosphodiester backbone.</text>
</comment>
<comment type="catalytic activity">
    <reaction evidence="1">
        <text>ATP-independent breakage of single-stranded DNA, followed by passage and rejoining.</text>
        <dbReference type="EC" id="5.6.2.1"/>
    </reaction>
</comment>
<comment type="cofactor">
    <cofactor evidence="1">
        <name>Mg(2+)</name>
        <dbReference type="ChEBI" id="CHEBI:18420"/>
    </cofactor>
</comment>
<comment type="similarity">
    <text evidence="1 2">Belongs to the type IA topoisomerase family.</text>
</comment>
<organism>
    <name type="scientific">Staphylococcus haemolyticus (strain JCSC1435)</name>
    <dbReference type="NCBI Taxonomy" id="279808"/>
    <lineage>
        <taxon>Bacteria</taxon>
        <taxon>Bacillati</taxon>
        <taxon>Bacillota</taxon>
        <taxon>Bacilli</taxon>
        <taxon>Bacillales</taxon>
        <taxon>Staphylococcaceae</taxon>
        <taxon>Staphylococcus</taxon>
    </lineage>
</organism>
<evidence type="ECO:0000255" key="1">
    <source>
        <dbReference type="HAMAP-Rule" id="MF_00953"/>
    </source>
</evidence>
<evidence type="ECO:0000255" key="2">
    <source>
        <dbReference type="PROSITE-ProRule" id="PRU01383"/>
    </source>
</evidence>
<evidence type="ECO:0000256" key="3">
    <source>
        <dbReference type="SAM" id="MobiDB-lite"/>
    </source>
</evidence>
<proteinExistence type="inferred from homology"/>
<protein>
    <recommendedName>
        <fullName evidence="1">DNA topoisomerase 3</fullName>
        <ecNumber evidence="1">5.6.2.1</ecNumber>
    </recommendedName>
    <alternativeName>
        <fullName evidence="1">DNA topoisomerase III</fullName>
    </alternativeName>
</protein>
<reference key="1">
    <citation type="journal article" date="2005" name="J. Bacteriol.">
        <title>Whole-genome sequencing of Staphylococcus haemolyticus uncovers the extreme plasticity of its genome and the evolution of human-colonizing staphylococcal species.</title>
        <authorList>
            <person name="Takeuchi F."/>
            <person name="Watanabe S."/>
            <person name="Baba T."/>
            <person name="Yuzawa H."/>
            <person name="Ito T."/>
            <person name="Morimoto Y."/>
            <person name="Kuroda M."/>
            <person name="Cui L."/>
            <person name="Takahashi M."/>
            <person name="Ankai A."/>
            <person name="Baba S."/>
            <person name="Fukui S."/>
            <person name="Lee J.C."/>
            <person name="Hiramatsu K."/>
        </authorList>
    </citation>
    <scope>NUCLEOTIDE SEQUENCE [LARGE SCALE GENOMIC DNA]</scope>
    <source>
        <strain>JCSC1435</strain>
    </source>
</reference>
<feature type="chain" id="PRO_0000286378" description="DNA topoisomerase 3">
    <location>
        <begin position="1"/>
        <end position="711"/>
    </location>
</feature>
<feature type="domain" description="Toprim" evidence="1">
    <location>
        <begin position="2"/>
        <end position="135"/>
    </location>
</feature>
<feature type="domain" description="Topo IA-type catalytic" evidence="2">
    <location>
        <begin position="152"/>
        <end position="580"/>
    </location>
</feature>
<feature type="region of interest" description="Interaction with DNA" evidence="1">
    <location>
        <begin position="186"/>
        <end position="191"/>
    </location>
</feature>
<feature type="region of interest" description="Disordered" evidence="3">
    <location>
        <begin position="672"/>
        <end position="699"/>
    </location>
</feature>
<feature type="compositionally biased region" description="Basic and acidic residues" evidence="3">
    <location>
        <begin position="683"/>
        <end position="692"/>
    </location>
</feature>
<feature type="active site" description="O-(5'-phospho-DNA)-tyrosine intermediate" evidence="2">
    <location>
        <position position="305"/>
    </location>
</feature>
<feature type="binding site" evidence="1">
    <location>
        <position position="8"/>
    </location>
    <ligand>
        <name>Mg(2+)</name>
        <dbReference type="ChEBI" id="CHEBI:18420"/>
        <note>catalytic</note>
    </ligand>
</feature>
<feature type="binding site" evidence="1">
    <location>
        <position position="104"/>
    </location>
    <ligand>
        <name>Mg(2+)</name>
        <dbReference type="ChEBI" id="CHEBI:18420"/>
        <note>catalytic</note>
    </ligand>
</feature>
<feature type="site" description="Interaction with DNA" evidence="1">
    <location>
        <position position="60"/>
    </location>
</feature>
<feature type="site" description="Interaction with DNA" evidence="1">
    <location>
        <position position="167"/>
    </location>
</feature>
<feature type="site" description="Interaction with DNA" evidence="1">
    <location>
        <position position="175"/>
    </location>
</feature>
<feature type="site" description="Interaction with DNA" evidence="1">
    <location>
        <position position="307"/>
    </location>
</feature>
<name>TOP3_STAHJ</name>
<sequence>MKSLILAEKPSVARDIAEAMNIKGKRNGYIENEKYVVTWALGHLVTNAQPEHYDKAYKEWKLEDLPIIPKRMQTVVIGKTSKQFKTVKSLILDKKVKEVIIATDAGREGELVARLILDKVHNKKPIKRLWISSVTKKAIQEGFKKLKDGREFQHLYEAALARSEADWIVGINATRALTTKYDAQLSLGRVQTPTIQLVNARQQEINHFKAKKYYTLSTEIGGLTFQLSTNKQHMTMEDATQIANEIKHVEGNVDSVEKKVKKSHPKPLYNLTDLQQEAYQRYKMGPKETLNTIQNLYERHKVLTYPRTDSNYLTDDMVDTIKERLYALLATDYKSQVKSLLGQSYSSKMRIFKNHKVSDHHAIIPTEVRPDMQSLSNRESKIYMMVAERFLESLMAPHEYEAVRVNVTVGQHIFAFNEKVTRQLGYKALKMNNDNVVKKVAFQKGEKYHLQSLKVNEHETTPPDYFNEGSLLKAMENPQNYIQLKEKKHANTLRQTGGIGTVATRADIIEKLFNLNAIESRDGKIKVTSKGKQILDLAPQELTSPLLTAEWEEKLLLIEKGRYNSRHFIDEMKAFTQSIVNTIKNSEQKYKHDNLTTTECPTCGKFMIKVKTKNGQMLVCQDPTCKTKKNVQRKTNARCPNCKKKMTLFGRGKDAVYRCVCGHTETQEQMDKRFKNKSSGKVSKKEMKKYMNNEDSLENNPFKDALKNLKL</sequence>